<name>TATA_SHELP</name>
<reference key="1">
    <citation type="submission" date="2007-03" db="EMBL/GenBank/DDBJ databases">
        <title>Complete sequence of Shewanella loihica PV-4.</title>
        <authorList>
            <consortium name="US DOE Joint Genome Institute"/>
            <person name="Copeland A."/>
            <person name="Lucas S."/>
            <person name="Lapidus A."/>
            <person name="Barry K."/>
            <person name="Detter J.C."/>
            <person name="Glavina del Rio T."/>
            <person name="Hammon N."/>
            <person name="Israni S."/>
            <person name="Dalin E."/>
            <person name="Tice H."/>
            <person name="Pitluck S."/>
            <person name="Chain P."/>
            <person name="Malfatti S."/>
            <person name="Shin M."/>
            <person name="Vergez L."/>
            <person name="Schmutz J."/>
            <person name="Larimer F."/>
            <person name="Land M."/>
            <person name="Hauser L."/>
            <person name="Kyrpides N."/>
            <person name="Mikhailova N."/>
            <person name="Romine M.F."/>
            <person name="Serres G."/>
            <person name="Fredrickson J."/>
            <person name="Tiedje J."/>
            <person name="Richardson P."/>
        </authorList>
    </citation>
    <scope>NUCLEOTIDE SEQUENCE [LARGE SCALE GENOMIC DNA]</scope>
    <source>
        <strain>ATCC BAA-1088 / PV-4</strain>
    </source>
</reference>
<protein>
    <recommendedName>
        <fullName evidence="1">Sec-independent protein translocase protein TatA</fullName>
    </recommendedName>
</protein>
<keyword id="KW-0997">Cell inner membrane</keyword>
<keyword id="KW-1003">Cell membrane</keyword>
<keyword id="KW-0472">Membrane</keyword>
<keyword id="KW-0653">Protein transport</keyword>
<keyword id="KW-1185">Reference proteome</keyword>
<keyword id="KW-0811">Translocation</keyword>
<keyword id="KW-0812">Transmembrane</keyword>
<keyword id="KW-1133">Transmembrane helix</keyword>
<keyword id="KW-0813">Transport</keyword>
<sequence length="76" mass="8182">MGGISIWQLLIIALIVVLLFGTKKLRSLGGDLGGAVKGFKNAMSSEDEKKAIEDTSAEKTAQTEEKKTESKDKEQA</sequence>
<organism>
    <name type="scientific">Shewanella loihica (strain ATCC BAA-1088 / PV-4)</name>
    <dbReference type="NCBI Taxonomy" id="323850"/>
    <lineage>
        <taxon>Bacteria</taxon>
        <taxon>Pseudomonadati</taxon>
        <taxon>Pseudomonadota</taxon>
        <taxon>Gammaproteobacteria</taxon>
        <taxon>Alteromonadales</taxon>
        <taxon>Shewanellaceae</taxon>
        <taxon>Shewanella</taxon>
    </lineage>
</organism>
<proteinExistence type="inferred from homology"/>
<evidence type="ECO:0000255" key="1">
    <source>
        <dbReference type="HAMAP-Rule" id="MF_00236"/>
    </source>
</evidence>
<evidence type="ECO:0000256" key="2">
    <source>
        <dbReference type="SAM" id="MobiDB-lite"/>
    </source>
</evidence>
<feature type="chain" id="PRO_1000044442" description="Sec-independent protein translocase protein TatA">
    <location>
        <begin position="1"/>
        <end position="76"/>
    </location>
</feature>
<feature type="transmembrane region" description="Helical" evidence="1">
    <location>
        <begin position="1"/>
        <end position="21"/>
    </location>
</feature>
<feature type="region of interest" description="Disordered" evidence="2">
    <location>
        <begin position="43"/>
        <end position="76"/>
    </location>
</feature>
<feature type="compositionally biased region" description="Basic and acidic residues" evidence="2">
    <location>
        <begin position="46"/>
        <end position="76"/>
    </location>
</feature>
<accession>A3QIE4</accession>
<comment type="function">
    <text evidence="1">Part of the twin-arginine translocation (Tat) system that transports large folded proteins containing a characteristic twin-arginine motif in their signal peptide across membranes. TatA could form the protein-conducting channel of the Tat system.</text>
</comment>
<comment type="subunit">
    <text evidence="1">The Tat system comprises two distinct complexes: a TatABC complex, containing multiple copies of TatA, TatB and TatC subunits, and a separate TatA complex, containing only TatA subunits. Substrates initially bind to the TatABC complex, which probably triggers association of the separate TatA complex to form the active translocon.</text>
</comment>
<comment type="subcellular location">
    <subcellularLocation>
        <location evidence="1">Cell inner membrane</location>
        <topology evidence="1">Single-pass membrane protein</topology>
    </subcellularLocation>
</comment>
<comment type="similarity">
    <text evidence="1">Belongs to the TatA/E family.</text>
</comment>
<gene>
    <name evidence="1" type="primary">tatA</name>
    <name type="ordered locus">Shew_3376</name>
</gene>
<dbReference type="EMBL" id="CP000606">
    <property type="protein sequence ID" value="ABO25242.1"/>
    <property type="molecule type" value="Genomic_DNA"/>
</dbReference>
<dbReference type="RefSeq" id="WP_011867172.1">
    <property type="nucleotide sequence ID" value="NC_009092.1"/>
</dbReference>
<dbReference type="SMR" id="A3QIE4"/>
<dbReference type="STRING" id="323850.Shew_3376"/>
<dbReference type="KEGG" id="slo:Shew_3376"/>
<dbReference type="eggNOG" id="COG1826">
    <property type="taxonomic scope" value="Bacteria"/>
</dbReference>
<dbReference type="HOGENOM" id="CLU_086034_5_1_6"/>
<dbReference type="OrthoDB" id="7066617at2"/>
<dbReference type="Proteomes" id="UP000001558">
    <property type="component" value="Chromosome"/>
</dbReference>
<dbReference type="GO" id="GO:0033281">
    <property type="term" value="C:TAT protein transport complex"/>
    <property type="evidence" value="ECO:0007669"/>
    <property type="project" value="UniProtKB-UniRule"/>
</dbReference>
<dbReference type="GO" id="GO:0008320">
    <property type="term" value="F:protein transmembrane transporter activity"/>
    <property type="evidence" value="ECO:0007669"/>
    <property type="project" value="UniProtKB-UniRule"/>
</dbReference>
<dbReference type="GO" id="GO:0043953">
    <property type="term" value="P:protein transport by the Tat complex"/>
    <property type="evidence" value="ECO:0007669"/>
    <property type="project" value="UniProtKB-UniRule"/>
</dbReference>
<dbReference type="Gene3D" id="1.20.5.3310">
    <property type="match status" value="1"/>
</dbReference>
<dbReference type="HAMAP" id="MF_00236">
    <property type="entry name" value="TatA_E"/>
    <property type="match status" value="1"/>
</dbReference>
<dbReference type="InterPro" id="IPR003369">
    <property type="entry name" value="TatA/B/E"/>
</dbReference>
<dbReference type="InterPro" id="IPR006312">
    <property type="entry name" value="TatA/E"/>
</dbReference>
<dbReference type="NCBIfam" id="NF002813">
    <property type="entry name" value="PRK02958.1"/>
    <property type="match status" value="1"/>
</dbReference>
<dbReference type="NCBIfam" id="TIGR01411">
    <property type="entry name" value="tatAE"/>
    <property type="match status" value="1"/>
</dbReference>
<dbReference type="PANTHER" id="PTHR42982">
    <property type="entry name" value="SEC-INDEPENDENT PROTEIN TRANSLOCASE PROTEIN TATA"/>
    <property type="match status" value="1"/>
</dbReference>
<dbReference type="PANTHER" id="PTHR42982:SF1">
    <property type="entry name" value="SEC-INDEPENDENT PROTEIN TRANSLOCASE PROTEIN TATA"/>
    <property type="match status" value="1"/>
</dbReference>
<dbReference type="Pfam" id="PF02416">
    <property type="entry name" value="TatA_B_E"/>
    <property type="match status" value="1"/>
</dbReference>